<reference key="1">
    <citation type="journal article" date="2005" name="Science">
        <title>Extensive DNA inversions in the B. fragilis genome control variable gene expression.</title>
        <authorList>
            <person name="Cerdeno-Tarraga A.-M."/>
            <person name="Patrick S."/>
            <person name="Crossman L.C."/>
            <person name="Blakely G."/>
            <person name="Abratt V."/>
            <person name="Lennard N."/>
            <person name="Poxton I."/>
            <person name="Duerden B."/>
            <person name="Harris B."/>
            <person name="Quail M.A."/>
            <person name="Barron A."/>
            <person name="Clark L."/>
            <person name="Corton C."/>
            <person name="Doggett J."/>
            <person name="Holden M.T.G."/>
            <person name="Larke N."/>
            <person name="Line A."/>
            <person name="Lord A."/>
            <person name="Norbertczak H."/>
            <person name="Ormond D."/>
            <person name="Price C."/>
            <person name="Rabbinowitsch E."/>
            <person name="Woodward J."/>
            <person name="Barrell B.G."/>
            <person name="Parkhill J."/>
        </authorList>
    </citation>
    <scope>NUCLEOTIDE SEQUENCE [LARGE SCALE GENOMIC DNA]</scope>
    <source>
        <strain>ATCC 25285 / DSM 2151 / CCUG 4856 / JCM 11019 / LMG 10263 / NCTC 9343 / Onslow / VPI 2553 / EN-2</strain>
    </source>
</reference>
<sequence>MAKYKRVLLKLSGESLMGEKQYGIDEKRLAEYAAQIKEIHEQGVQIGIVIGGGNIFRGLSGANKGFDRVKGDQMGMLATVINSLALSSALVAAGVKARVLTAVRMEPIGEFYSKWKAIECMENGEIVIMSAGTGNPFFTTDTGSSLRGIEIEADVMLKGTRVDGIYTADPEKDPTATKFHDITYDEVLKRGLKVMDLTATCMCKENNLPIVVFDMDTVGNLKKVITGEEIGTLVHN</sequence>
<accession>Q5LHK5</accession>
<protein>
    <recommendedName>
        <fullName evidence="1">Uridylate kinase</fullName>
        <shortName evidence="1">UK</shortName>
        <ecNumber evidence="1">2.7.4.22</ecNumber>
    </recommendedName>
    <alternativeName>
        <fullName evidence="1">Uridine monophosphate kinase</fullName>
        <shortName evidence="1">UMP kinase</shortName>
        <shortName evidence="1">UMPK</shortName>
    </alternativeName>
</protein>
<proteinExistence type="inferred from homology"/>
<evidence type="ECO:0000255" key="1">
    <source>
        <dbReference type="HAMAP-Rule" id="MF_01220"/>
    </source>
</evidence>
<keyword id="KW-0067">ATP-binding</keyword>
<keyword id="KW-0963">Cytoplasm</keyword>
<keyword id="KW-0418">Kinase</keyword>
<keyword id="KW-0547">Nucleotide-binding</keyword>
<keyword id="KW-0665">Pyrimidine biosynthesis</keyword>
<keyword id="KW-0808">Transferase</keyword>
<comment type="function">
    <text evidence="1">Catalyzes the reversible phosphorylation of UMP to UDP.</text>
</comment>
<comment type="catalytic activity">
    <reaction evidence="1">
        <text>UMP + ATP = UDP + ADP</text>
        <dbReference type="Rhea" id="RHEA:24400"/>
        <dbReference type="ChEBI" id="CHEBI:30616"/>
        <dbReference type="ChEBI" id="CHEBI:57865"/>
        <dbReference type="ChEBI" id="CHEBI:58223"/>
        <dbReference type="ChEBI" id="CHEBI:456216"/>
        <dbReference type="EC" id="2.7.4.22"/>
    </reaction>
</comment>
<comment type="activity regulation">
    <text evidence="1">Inhibited by UTP.</text>
</comment>
<comment type="pathway">
    <text evidence="1">Pyrimidine metabolism; CTP biosynthesis via de novo pathway; UDP from UMP (UMPK route): step 1/1.</text>
</comment>
<comment type="subunit">
    <text evidence="1">Homohexamer.</text>
</comment>
<comment type="subcellular location">
    <subcellularLocation>
        <location evidence="1">Cytoplasm</location>
    </subcellularLocation>
</comment>
<comment type="similarity">
    <text evidence="1">Belongs to the UMP kinase family.</text>
</comment>
<gene>
    <name evidence="1" type="primary">pyrH</name>
    <name type="ordered locus">BF0626</name>
</gene>
<feature type="chain" id="PRO_1000053889" description="Uridylate kinase">
    <location>
        <begin position="1"/>
        <end position="236"/>
    </location>
</feature>
<feature type="binding site" evidence="1">
    <location>
        <begin position="10"/>
        <end position="13"/>
    </location>
    <ligand>
        <name>ATP</name>
        <dbReference type="ChEBI" id="CHEBI:30616"/>
    </ligand>
</feature>
<feature type="binding site" evidence="1">
    <location>
        <position position="52"/>
    </location>
    <ligand>
        <name>UMP</name>
        <dbReference type="ChEBI" id="CHEBI:57865"/>
    </ligand>
</feature>
<feature type="binding site" evidence="1">
    <location>
        <position position="53"/>
    </location>
    <ligand>
        <name>ATP</name>
        <dbReference type="ChEBI" id="CHEBI:30616"/>
    </ligand>
</feature>
<feature type="binding site" evidence="1">
    <location>
        <position position="57"/>
    </location>
    <ligand>
        <name>ATP</name>
        <dbReference type="ChEBI" id="CHEBI:30616"/>
    </ligand>
</feature>
<feature type="binding site" evidence="1">
    <location>
        <position position="72"/>
    </location>
    <ligand>
        <name>UMP</name>
        <dbReference type="ChEBI" id="CHEBI:57865"/>
    </ligand>
</feature>
<feature type="binding site" evidence="1">
    <location>
        <begin position="133"/>
        <end position="140"/>
    </location>
    <ligand>
        <name>UMP</name>
        <dbReference type="ChEBI" id="CHEBI:57865"/>
    </ligand>
</feature>
<feature type="binding site" evidence="1">
    <location>
        <position position="160"/>
    </location>
    <ligand>
        <name>ATP</name>
        <dbReference type="ChEBI" id="CHEBI:30616"/>
    </ligand>
</feature>
<feature type="binding site" evidence="1">
    <location>
        <position position="166"/>
    </location>
    <ligand>
        <name>ATP</name>
        <dbReference type="ChEBI" id="CHEBI:30616"/>
    </ligand>
</feature>
<feature type="binding site" evidence="1">
    <location>
        <position position="169"/>
    </location>
    <ligand>
        <name>ATP</name>
        <dbReference type="ChEBI" id="CHEBI:30616"/>
    </ligand>
</feature>
<dbReference type="EC" id="2.7.4.22" evidence="1"/>
<dbReference type="EMBL" id="CR626927">
    <property type="protein sequence ID" value="CAH06375.1"/>
    <property type="molecule type" value="Genomic_DNA"/>
</dbReference>
<dbReference type="RefSeq" id="WP_005784714.1">
    <property type="nucleotide sequence ID" value="NZ_UFTH01000001.1"/>
</dbReference>
<dbReference type="SMR" id="Q5LHK5"/>
<dbReference type="PaxDb" id="272559-BF9343_0596"/>
<dbReference type="GeneID" id="60368840"/>
<dbReference type="KEGG" id="bfs:BF9343_0596"/>
<dbReference type="eggNOG" id="COG0528">
    <property type="taxonomic scope" value="Bacteria"/>
</dbReference>
<dbReference type="HOGENOM" id="CLU_033861_0_0_10"/>
<dbReference type="UniPathway" id="UPA00159">
    <property type="reaction ID" value="UER00275"/>
</dbReference>
<dbReference type="Proteomes" id="UP000006731">
    <property type="component" value="Chromosome"/>
</dbReference>
<dbReference type="GO" id="GO:0005737">
    <property type="term" value="C:cytoplasm"/>
    <property type="evidence" value="ECO:0007669"/>
    <property type="project" value="UniProtKB-SubCell"/>
</dbReference>
<dbReference type="GO" id="GO:0005524">
    <property type="term" value="F:ATP binding"/>
    <property type="evidence" value="ECO:0007669"/>
    <property type="project" value="UniProtKB-KW"/>
</dbReference>
<dbReference type="GO" id="GO:0033862">
    <property type="term" value="F:UMP kinase activity"/>
    <property type="evidence" value="ECO:0007669"/>
    <property type="project" value="UniProtKB-EC"/>
</dbReference>
<dbReference type="GO" id="GO:0044210">
    <property type="term" value="P:'de novo' CTP biosynthetic process"/>
    <property type="evidence" value="ECO:0007669"/>
    <property type="project" value="UniProtKB-UniRule"/>
</dbReference>
<dbReference type="GO" id="GO:0006225">
    <property type="term" value="P:UDP biosynthetic process"/>
    <property type="evidence" value="ECO:0007669"/>
    <property type="project" value="TreeGrafter"/>
</dbReference>
<dbReference type="CDD" id="cd04254">
    <property type="entry name" value="AAK_UMPK-PyrH-Ec"/>
    <property type="match status" value="1"/>
</dbReference>
<dbReference type="FunFam" id="3.40.1160.10:FF:000001">
    <property type="entry name" value="Uridylate kinase"/>
    <property type="match status" value="1"/>
</dbReference>
<dbReference type="Gene3D" id="3.40.1160.10">
    <property type="entry name" value="Acetylglutamate kinase-like"/>
    <property type="match status" value="1"/>
</dbReference>
<dbReference type="HAMAP" id="MF_01220_B">
    <property type="entry name" value="PyrH_B"/>
    <property type="match status" value="1"/>
</dbReference>
<dbReference type="InterPro" id="IPR036393">
    <property type="entry name" value="AceGlu_kinase-like_sf"/>
</dbReference>
<dbReference type="InterPro" id="IPR001048">
    <property type="entry name" value="Asp/Glu/Uridylate_kinase"/>
</dbReference>
<dbReference type="InterPro" id="IPR011817">
    <property type="entry name" value="Uridylate_kinase"/>
</dbReference>
<dbReference type="InterPro" id="IPR015963">
    <property type="entry name" value="Uridylate_kinase_bac"/>
</dbReference>
<dbReference type="NCBIfam" id="TIGR02075">
    <property type="entry name" value="pyrH_bact"/>
    <property type="match status" value="1"/>
</dbReference>
<dbReference type="PANTHER" id="PTHR42833">
    <property type="entry name" value="URIDYLATE KINASE"/>
    <property type="match status" value="1"/>
</dbReference>
<dbReference type="PANTHER" id="PTHR42833:SF4">
    <property type="entry name" value="URIDYLATE KINASE PUMPKIN, CHLOROPLASTIC"/>
    <property type="match status" value="1"/>
</dbReference>
<dbReference type="Pfam" id="PF00696">
    <property type="entry name" value="AA_kinase"/>
    <property type="match status" value="1"/>
</dbReference>
<dbReference type="PIRSF" id="PIRSF005650">
    <property type="entry name" value="Uridylate_kin"/>
    <property type="match status" value="1"/>
</dbReference>
<dbReference type="SUPFAM" id="SSF53633">
    <property type="entry name" value="Carbamate kinase-like"/>
    <property type="match status" value="1"/>
</dbReference>
<organism>
    <name type="scientific">Bacteroides fragilis (strain ATCC 25285 / DSM 2151 / CCUG 4856 / JCM 11019 / LMG 10263 / NCTC 9343 / Onslow / VPI 2553 / EN-2)</name>
    <dbReference type="NCBI Taxonomy" id="272559"/>
    <lineage>
        <taxon>Bacteria</taxon>
        <taxon>Pseudomonadati</taxon>
        <taxon>Bacteroidota</taxon>
        <taxon>Bacteroidia</taxon>
        <taxon>Bacteroidales</taxon>
        <taxon>Bacteroidaceae</taxon>
        <taxon>Bacteroides</taxon>
    </lineage>
</organism>
<name>PYRH_BACFN</name>